<comment type="function">
    <molecule>Vasoactive intestinal peptide</molecule>
    <text evidence="1">VIP is a neuropeptide involved in a diverse array of physiological processes through activating the PACAP subfamily of class B1 G protein-coupled receptors: VIP receptor 1 (VPR1) and VIP receptor 2 (VPR2). Abundantly expressed throughout the CNS and peripheral nervous systems where they primarily exert neuroprotective and immune modulatory roles. Also causes vasodilation, lowers arterial blood pressure, stimulates myocardial contractility, increases glycogenolysis and relaxes the smooth muscle of trachea, stomach and gall bladder.</text>
</comment>
<comment type="subcellular location">
    <subcellularLocation>
        <location>Secreted</location>
    </subcellularLocation>
</comment>
<comment type="similarity">
    <text evidence="3">Belongs to the glucagon family.</text>
</comment>
<reference key="1">
    <citation type="journal article" date="1987" name="Biochim. Biophys. Acta">
        <title>A novel vasoactive intestinal peptide (VIP) from elasmobranch intestine has full affinity for mammalian pancreatic VIP receptors.</title>
        <authorList>
            <person name="Dimaline R."/>
            <person name="Young J."/>
            <person name="Thwaites D.T."/>
            <person name="Lee C.M."/>
            <person name="Shuttleworth T.J."/>
            <person name="Thorndyke M.C."/>
        </authorList>
    </citation>
    <scope>PROTEIN SEQUENCE</scope>
    <scope>AMIDATION AT ALA-28</scope>
</reference>
<reference key="2">
    <citation type="journal article" date="1988" name="Ann. N. Y. Acad. Sci.">
        <title>Amino acid sequence of a biologically active vasoactive intestinal peptide from the elasmobranch Scyliorhinus canicula.</title>
        <authorList>
            <person name="Dimaline R."/>
            <person name="Young J."/>
            <person name="Thwaites D.T."/>
            <person name="Lee C.M."/>
            <person name="Thorndyke M.C."/>
        </authorList>
    </citation>
    <scope>PROTEIN SEQUENCE</scope>
</reference>
<reference key="3">
    <citation type="journal article" date="1986" name="Regul. Pept.">
        <title>Isolation and partial sequence of elasmobranch VIP.</title>
        <authorList>
            <person name="Dimaline R."/>
            <person name="Thorndyke M.C."/>
            <person name="Young J."/>
        </authorList>
    </citation>
    <scope>PROTEIN SEQUENCE OF 1-10</scope>
</reference>
<sequence length="28" mass="3270">HSDAVFTDNYSRIRKQMAVKKYINSLLA</sequence>
<keyword id="KW-0027">Amidation</keyword>
<keyword id="KW-0903">Direct protein sequencing</keyword>
<keyword id="KW-0372">Hormone</keyword>
<keyword id="KW-0964">Secreted</keyword>
<accession>P09685</accession>
<proteinExistence type="evidence at protein level"/>
<evidence type="ECO:0000250" key="1">
    <source>
        <dbReference type="UniProtKB" id="P01282"/>
    </source>
</evidence>
<evidence type="ECO:0000269" key="2">
    <source>
    </source>
</evidence>
<evidence type="ECO:0000305" key="3"/>
<dbReference type="PIR" id="A60303">
    <property type="entry name" value="A60303"/>
</dbReference>
<dbReference type="SMR" id="P09685"/>
<dbReference type="GO" id="GO:0005576">
    <property type="term" value="C:extracellular region"/>
    <property type="evidence" value="ECO:0007669"/>
    <property type="project" value="UniProtKB-SubCell"/>
</dbReference>
<dbReference type="GO" id="GO:0043005">
    <property type="term" value="C:neuron projection"/>
    <property type="evidence" value="ECO:0007669"/>
    <property type="project" value="TreeGrafter"/>
</dbReference>
<dbReference type="GO" id="GO:0005184">
    <property type="term" value="F:neuropeptide hormone activity"/>
    <property type="evidence" value="ECO:0000250"/>
    <property type="project" value="UniProtKB"/>
</dbReference>
<dbReference type="GO" id="GO:0051428">
    <property type="term" value="F:peptide hormone receptor binding"/>
    <property type="evidence" value="ECO:0007669"/>
    <property type="project" value="TreeGrafter"/>
</dbReference>
<dbReference type="GO" id="GO:0031891">
    <property type="term" value="F:type 1 vasoactive intestinal polypeptide receptor binding"/>
    <property type="evidence" value="ECO:0000250"/>
    <property type="project" value="UniProtKB"/>
</dbReference>
<dbReference type="GO" id="GO:0007189">
    <property type="term" value="P:adenylate cyclase-activating G protein-coupled receptor signaling pathway"/>
    <property type="evidence" value="ECO:0000250"/>
    <property type="project" value="UniProtKB"/>
</dbReference>
<dbReference type="GO" id="GO:0048242">
    <property type="term" value="P:epinephrine secretion"/>
    <property type="evidence" value="ECO:0007669"/>
    <property type="project" value="TreeGrafter"/>
</dbReference>
<dbReference type="GO" id="GO:0048255">
    <property type="term" value="P:mRNA stabilization"/>
    <property type="evidence" value="ECO:0000250"/>
    <property type="project" value="AgBase"/>
</dbReference>
<dbReference type="GO" id="GO:0070459">
    <property type="term" value="P:prolactin secretion"/>
    <property type="evidence" value="ECO:0000250"/>
    <property type="project" value="AgBase"/>
</dbReference>
<dbReference type="GO" id="GO:0032880">
    <property type="term" value="P:regulation of protein localization"/>
    <property type="evidence" value="ECO:0007669"/>
    <property type="project" value="TreeGrafter"/>
</dbReference>
<dbReference type="Gene3D" id="6.10.250.590">
    <property type="match status" value="1"/>
</dbReference>
<dbReference type="InterPro" id="IPR000532">
    <property type="entry name" value="Glucagon_GIP_secretin_VIP"/>
</dbReference>
<dbReference type="InterPro" id="IPR046963">
    <property type="entry name" value="VIP/GHRH-like"/>
</dbReference>
<dbReference type="PANTHER" id="PTHR11213">
    <property type="entry name" value="GLUCAGON-FAMILY NEUROPEPTIDE"/>
    <property type="match status" value="1"/>
</dbReference>
<dbReference type="PANTHER" id="PTHR11213:SF5">
    <property type="entry name" value="VIP PEPTIDES"/>
    <property type="match status" value="1"/>
</dbReference>
<dbReference type="Pfam" id="PF00123">
    <property type="entry name" value="Hormone_2"/>
    <property type="match status" value="1"/>
</dbReference>
<dbReference type="SMART" id="SM00070">
    <property type="entry name" value="GLUCA"/>
    <property type="match status" value="1"/>
</dbReference>
<dbReference type="PROSITE" id="PS00260">
    <property type="entry name" value="GLUCAGON"/>
    <property type="match status" value="1"/>
</dbReference>
<organism>
    <name type="scientific">Scyliorhinus canicula</name>
    <name type="common">Small-spotted catshark</name>
    <name type="synonym">Squalus canicula</name>
    <dbReference type="NCBI Taxonomy" id="7830"/>
    <lineage>
        <taxon>Eukaryota</taxon>
        <taxon>Metazoa</taxon>
        <taxon>Chordata</taxon>
        <taxon>Craniata</taxon>
        <taxon>Vertebrata</taxon>
        <taxon>Chondrichthyes</taxon>
        <taxon>Elasmobranchii</taxon>
        <taxon>Galeomorphii</taxon>
        <taxon>Galeoidea</taxon>
        <taxon>Carcharhiniformes</taxon>
        <taxon>Scyliorhinidae</taxon>
        <taxon>Scyliorhinus</taxon>
    </lineage>
</organism>
<protein>
    <recommendedName>
        <fullName>Vasoactive intestinal peptide</fullName>
        <shortName>VIP</shortName>
    </recommendedName>
    <alternativeName>
        <fullName>Vasoactive intestinal polypeptide</fullName>
    </alternativeName>
</protein>
<gene>
    <name type="primary">vip</name>
</gene>
<feature type="peptide" id="PRO_0000043946" description="Vasoactive intestinal peptide">
    <location>
        <begin position="1"/>
        <end position="28"/>
    </location>
</feature>
<feature type="modified residue" description="Alanine amide" evidence="2">
    <location>
        <position position="28"/>
    </location>
</feature>
<name>VIP_SCYCA</name>